<gene>
    <name evidence="1" type="primary">frr</name>
    <name type="ordered locus">Dred_1975</name>
</gene>
<sequence>MVKELISSAEDHMKKSVDVVRREFASLRAGRATPSILDKVTVSYYGTPTPLNQLANISVPEARVLVIQPWDKSVIPEVEKAILKSDVGITPSSDGTVIRLIIPQLTQERRTELVKVIKKKAEEGRVAVRNIRRDTNDSIKAKQKDGIPEDEAKRGQDELQKLTDKYVKEIDEMVKAKEQEIMQV</sequence>
<organism>
    <name type="scientific">Desulforamulus reducens (strain ATCC BAA-1160 / DSM 100696 / MI-1)</name>
    <name type="common">Desulfotomaculum reducens</name>
    <dbReference type="NCBI Taxonomy" id="349161"/>
    <lineage>
        <taxon>Bacteria</taxon>
        <taxon>Bacillati</taxon>
        <taxon>Bacillota</taxon>
        <taxon>Clostridia</taxon>
        <taxon>Eubacteriales</taxon>
        <taxon>Peptococcaceae</taxon>
        <taxon>Desulforamulus</taxon>
    </lineage>
</organism>
<evidence type="ECO:0000255" key="1">
    <source>
        <dbReference type="HAMAP-Rule" id="MF_00040"/>
    </source>
</evidence>
<evidence type="ECO:0000256" key="2">
    <source>
        <dbReference type="SAM" id="MobiDB-lite"/>
    </source>
</evidence>
<accession>A4J5Z0</accession>
<feature type="chain" id="PRO_1000071061" description="Ribosome-recycling factor">
    <location>
        <begin position="1"/>
        <end position="184"/>
    </location>
</feature>
<feature type="region of interest" description="Disordered" evidence="2">
    <location>
        <begin position="137"/>
        <end position="158"/>
    </location>
</feature>
<reference key="1">
    <citation type="submission" date="2007-03" db="EMBL/GenBank/DDBJ databases">
        <title>Complete sequence of Desulfotomaculum reducens MI-1.</title>
        <authorList>
            <consortium name="US DOE Joint Genome Institute"/>
            <person name="Copeland A."/>
            <person name="Lucas S."/>
            <person name="Lapidus A."/>
            <person name="Barry K."/>
            <person name="Detter J.C."/>
            <person name="Glavina del Rio T."/>
            <person name="Hammon N."/>
            <person name="Israni S."/>
            <person name="Dalin E."/>
            <person name="Tice H."/>
            <person name="Pitluck S."/>
            <person name="Sims D."/>
            <person name="Brettin T."/>
            <person name="Bruce D."/>
            <person name="Han C."/>
            <person name="Tapia R."/>
            <person name="Schmutz J."/>
            <person name="Larimer F."/>
            <person name="Land M."/>
            <person name="Hauser L."/>
            <person name="Kyrpides N."/>
            <person name="Kim E."/>
            <person name="Tebo B.M."/>
            <person name="Richardson P."/>
        </authorList>
    </citation>
    <scope>NUCLEOTIDE SEQUENCE [LARGE SCALE GENOMIC DNA]</scope>
    <source>
        <strain>ATCC BAA-1160 / DSM 100696 / MI-1</strain>
    </source>
</reference>
<comment type="function">
    <text evidence="1">Responsible for the release of ribosomes from messenger RNA at the termination of protein biosynthesis. May increase the efficiency of translation by recycling ribosomes from one round of translation to another.</text>
</comment>
<comment type="subcellular location">
    <subcellularLocation>
        <location evidence="1">Cytoplasm</location>
    </subcellularLocation>
</comment>
<comment type="similarity">
    <text evidence="1">Belongs to the RRF family.</text>
</comment>
<proteinExistence type="inferred from homology"/>
<protein>
    <recommendedName>
        <fullName evidence="1">Ribosome-recycling factor</fullName>
        <shortName evidence="1">RRF</shortName>
    </recommendedName>
    <alternativeName>
        <fullName evidence="1">Ribosome-releasing factor</fullName>
    </alternativeName>
</protein>
<dbReference type="EMBL" id="CP000612">
    <property type="protein sequence ID" value="ABO50493.1"/>
    <property type="molecule type" value="Genomic_DNA"/>
</dbReference>
<dbReference type="RefSeq" id="WP_011878303.1">
    <property type="nucleotide sequence ID" value="NC_009253.1"/>
</dbReference>
<dbReference type="SMR" id="A4J5Z0"/>
<dbReference type="STRING" id="349161.Dred_1975"/>
<dbReference type="KEGG" id="drm:Dred_1975"/>
<dbReference type="eggNOG" id="COG0233">
    <property type="taxonomic scope" value="Bacteria"/>
</dbReference>
<dbReference type="HOGENOM" id="CLU_073981_2_0_9"/>
<dbReference type="OrthoDB" id="9804006at2"/>
<dbReference type="Proteomes" id="UP000001556">
    <property type="component" value="Chromosome"/>
</dbReference>
<dbReference type="GO" id="GO:0005737">
    <property type="term" value="C:cytoplasm"/>
    <property type="evidence" value="ECO:0007669"/>
    <property type="project" value="UniProtKB-SubCell"/>
</dbReference>
<dbReference type="GO" id="GO:0043023">
    <property type="term" value="F:ribosomal large subunit binding"/>
    <property type="evidence" value="ECO:0007669"/>
    <property type="project" value="TreeGrafter"/>
</dbReference>
<dbReference type="GO" id="GO:0006415">
    <property type="term" value="P:translational termination"/>
    <property type="evidence" value="ECO:0007669"/>
    <property type="project" value="UniProtKB-UniRule"/>
</dbReference>
<dbReference type="CDD" id="cd00520">
    <property type="entry name" value="RRF"/>
    <property type="match status" value="1"/>
</dbReference>
<dbReference type="FunFam" id="1.10.132.20:FF:000001">
    <property type="entry name" value="Ribosome-recycling factor"/>
    <property type="match status" value="1"/>
</dbReference>
<dbReference type="FunFam" id="3.30.1360.40:FF:000001">
    <property type="entry name" value="Ribosome-recycling factor"/>
    <property type="match status" value="1"/>
</dbReference>
<dbReference type="Gene3D" id="3.30.1360.40">
    <property type="match status" value="1"/>
</dbReference>
<dbReference type="Gene3D" id="1.10.132.20">
    <property type="entry name" value="Ribosome-recycling factor"/>
    <property type="match status" value="1"/>
</dbReference>
<dbReference type="HAMAP" id="MF_00040">
    <property type="entry name" value="RRF"/>
    <property type="match status" value="1"/>
</dbReference>
<dbReference type="InterPro" id="IPR002661">
    <property type="entry name" value="Ribosome_recyc_fac"/>
</dbReference>
<dbReference type="InterPro" id="IPR023584">
    <property type="entry name" value="Ribosome_recyc_fac_dom"/>
</dbReference>
<dbReference type="InterPro" id="IPR036191">
    <property type="entry name" value="RRF_sf"/>
</dbReference>
<dbReference type="NCBIfam" id="TIGR00496">
    <property type="entry name" value="frr"/>
    <property type="match status" value="1"/>
</dbReference>
<dbReference type="PANTHER" id="PTHR20982:SF3">
    <property type="entry name" value="MITOCHONDRIAL RIBOSOME RECYCLING FACTOR PSEUDO 1"/>
    <property type="match status" value="1"/>
</dbReference>
<dbReference type="PANTHER" id="PTHR20982">
    <property type="entry name" value="RIBOSOME RECYCLING FACTOR"/>
    <property type="match status" value="1"/>
</dbReference>
<dbReference type="Pfam" id="PF01765">
    <property type="entry name" value="RRF"/>
    <property type="match status" value="1"/>
</dbReference>
<dbReference type="SUPFAM" id="SSF55194">
    <property type="entry name" value="Ribosome recycling factor, RRF"/>
    <property type="match status" value="1"/>
</dbReference>
<name>RRF_DESRM</name>
<keyword id="KW-0963">Cytoplasm</keyword>
<keyword id="KW-0648">Protein biosynthesis</keyword>
<keyword id="KW-1185">Reference proteome</keyword>